<keyword id="KW-0150">Chloroplast</keyword>
<keyword id="KW-0507">mRNA processing</keyword>
<keyword id="KW-0934">Plastid</keyword>
<keyword id="KW-0694">RNA-binding</keyword>
<keyword id="KW-0819">tRNA processing</keyword>
<geneLocation type="chloroplast"/>
<comment type="function">
    <text evidence="1">Usually encoded in the trnK tRNA gene intron. Probably assists in splicing its own and other chloroplast group II introns.</text>
</comment>
<comment type="subcellular location">
    <subcellularLocation>
        <location>Plastid</location>
        <location>Chloroplast</location>
    </subcellularLocation>
</comment>
<comment type="similarity">
    <text evidence="1">Belongs to the intron maturase 2 family. MatK subfamily.</text>
</comment>
<reference key="1">
    <citation type="submission" date="2002-03" db="EMBL/GenBank/DDBJ databases">
        <title>Phylogeny of the North American pines.</title>
        <authorList>
            <person name="Geada Lopez G."/>
            <person name="Kamiya K."/>
            <person name="Harada K."/>
        </authorList>
    </citation>
    <scope>NUCLEOTIDE SEQUENCE [GENOMIC DNA]</scope>
    <source>
        <tissue>Leaf</tissue>
    </source>
</reference>
<organism>
    <name type="scientific">Pinus halepensis</name>
    <name type="common">Aleppo pine</name>
    <dbReference type="NCBI Taxonomy" id="71633"/>
    <lineage>
        <taxon>Eukaryota</taxon>
        <taxon>Viridiplantae</taxon>
        <taxon>Streptophyta</taxon>
        <taxon>Embryophyta</taxon>
        <taxon>Tracheophyta</taxon>
        <taxon>Spermatophyta</taxon>
        <taxon>Pinopsida</taxon>
        <taxon>Pinidae</taxon>
        <taxon>Conifers I</taxon>
        <taxon>Pinales</taxon>
        <taxon>Pinaceae</taxon>
        <taxon>Pinus</taxon>
        <taxon>Pinus subgen. Pinus</taxon>
    </lineage>
</organism>
<evidence type="ECO:0000255" key="1">
    <source>
        <dbReference type="HAMAP-Rule" id="MF_01390"/>
    </source>
</evidence>
<feature type="chain" id="PRO_0000143614" description="Maturase K">
    <location>
        <begin position="1"/>
        <end position="515"/>
    </location>
</feature>
<name>MATK_PINHA</name>
<proteinExistence type="inferred from homology"/>
<dbReference type="EMBL" id="AB081089">
    <property type="protein sequence ID" value="BAC15590.1"/>
    <property type="molecule type" value="Genomic_DNA"/>
</dbReference>
<dbReference type="GO" id="GO:0009507">
    <property type="term" value="C:chloroplast"/>
    <property type="evidence" value="ECO:0007669"/>
    <property type="project" value="UniProtKB-SubCell"/>
</dbReference>
<dbReference type="GO" id="GO:0003723">
    <property type="term" value="F:RNA binding"/>
    <property type="evidence" value="ECO:0007669"/>
    <property type="project" value="UniProtKB-KW"/>
</dbReference>
<dbReference type="GO" id="GO:0006397">
    <property type="term" value="P:mRNA processing"/>
    <property type="evidence" value="ECO:0007669"/>
    <property type="project" value="UniProtKB-KW"/>
</dbReference>
<dbReference type="GO" id="GO:0008380">
    <property type="term" value="P:RNA splicing"/>
    <property type="evidence" value="ECO:0007669"/>
    <property type="project" value="UniProtKB-UniRule"/>
</dbReference>
<dbReference type="GO" id="GO:0008033">
    <property type="term" value="P:tRNA processing"/>
    <property type="evidence" value="ECO:0007669"/>
    <property type="project" value="UniProtKB-KW"/>
</dbReference>
<dbReference type="HAMAP" id="MF_01390">
    <property type="entry name" value="MatK"/>
    <property type="match status" value="1"/>
</dbReference>
<dbReference type="InterPro" id="IPR024937">
    <property type="entry name" value="Domain_X"/>
</dbReference>
<dbReference type="InterPro" id="IPR002866">
    <property type="entry name" value="Maturase_MatK"/>
</dbReference>
<dbReference type="InterPro" id="IPR024942">
    <property type="entry name" value="Maturase_MatK_N"/>
</dbReference>
<dbReference type="PANTHER" id="PTHR34811">
    <property type="entry name" value="MATURASE K"/>
    <property type="match status" value="1"/>
</dbReference>
<dbReference type="PANTHER" id="PTHR34811:SF1">
    <property type="entry name" value="MATURASE K"/>
    <property type="match status" value="1"/>
</dbReference>
<dbReference type="Pfam" id="PF01348">
    <property type="entry name" value="Intron_maturas2"/>
    <property type="match status" value="1"/>
</dbReference>
<dbReference type="Pfam" id="PF01824">
    <property type="entry name" value="MatK_N"/>
    <property type="match status" value="1"/>
</dbReference>
<gene>
    <name evidence="1" type="primary">matK</name>
</gene>
<accession>Q8HQQ8</accession>
<protein>
    <recommendedName>
        <fullName evidence="1">Maturase K</fullName>
    </recommendedName>
    <alternativeName>
        <fullName evidence="1">Intron maturase</fullName>
    </alternativeName>
</protein>
<sequence>MDEFHRCGKEDSFWQQCFLYPLFFQEDLYAISHDHYLDVSSSSRPMEHLSSNDQLSFLTVKRLIGQIRQQNHSIVLFVNCDPNALADRKKSFYSESVLEALTLVLEVPFSIRSKYSVEGMNECKSFRSIHSIFPFLEDKFPHSNSILDARIPYSIHPEILVRTFRRWIRDAPSLHPLRSVLYDYRNSPENLQRSIIVVPRVNTRFFLFLLNYYVCECESILFSRLKRSSHSRSLSHGSFPQRTHFHRKIKHIIIFSRRNSLKSIWSLKDPKINYVRYGERPIIAIKGAHLLVKKCRYYLLIFRQFYFHLWSEPYRVCSHQLSKNCSSSPGYFLRVRMNPIFVRTKMLDELFIADLITNEMDPIVPIVPIIGLLAAEKFCDISGRPISKLSWTSLTDDDILDRFDQIWRNLFHYYSGSFDRDGLYRIKYILSLSCAKTLACKHKSTIRVVRKELGPELLKKSFSKEREFDSLPFSSKAAARSQRERIWHSDILQINPLANSWQKIQDLKIENLFDQ</sequence>